<sequence>MRAALVAVAALLWVALHAAAWVNDVSPKMYVQFGEERVQRFLGNESHKDHFKLLEKDHNSLLVGARNIVYNISLRDLTEFTEQRIEWHSSGAHRELCYLKGKSEDDCQNYIRVLAKIDDDRVLICGTNAYKPLCRHYALKDGDYVVEKEYEGRGLCPFDPDHNSTAIYSEGQLYSATVADFSGTDPLIYRGPLRTERSDLKQLNAPNFVNTMEYNDFIFFFFRETAVEYINCGKAIYSRVARVCKHDKGGPHQFGDRWTSFLKSRLNCSVPGDYPFYFNEIQSTSDIIEGNYGGQVEKLIYGVFTTPVNSIGGSAVCAFSMKSILESFDGPFKEQETMNSNWLAVPSLKVPEPRPGQCVNDSRTLPDVSVNFVKSHTLMDEAVPAFFTRPILIRISLQYRFTKIAVDQQVRTPDGKAYDVLFIGTDDGKVIKALNSASFDSSDTVDSVVIEELQVLPPGVPVKNLYVVRMDGDDSKLVVVSDDEILAIKLHRCGSDKITNCRECVSLQDPYCAWDNVELKCTAVGSPDWSAGKRRFIQNISLGEHKACGGRPQTEIVASPVPTQPTTKSSGDPVHSIHQAEFEPEIDNEIVIGVDDSNVIPNTLAEINHAGSKLPSSQEKLPIYTAETLTIAIVTSCLGALVVGFISGFLFSRRCRGEDYTDMPFPDQRHQLNRLTEAGLNADSPYLPPCANNKAAINLVLNVPPKNANGKNANSSAENKPIQKVKKTYI</sequence>
<dbReference type="EMBL" id="L00709">
    <property type="protein sequence ID" value="AAA29808.1"/>
    <property type="molecule type" value="mRNA"/>
</dbReference>
<dbReference type="PIR" id="JH0798">
    <property type="entry name" value="JH0798"/>
</dbReference>
<dbReference type="SMR" id="Q26473"/>
<dbReference type="GlyCosmos" id="Q26473">
    <property type="glycosylation" value="6 sites, No reported glycans"/>
</dbReference>
<dbReference type="OrthoDB" id="9988752at2759"/>
<dbReference type="GO" id="GO:0005886">
    <property type="term" value="C:plasma membrane"/>
    <property type="evidence" value="ECO:0007669"/>
    <property type="project" value="TreeGrafter"/>
</dbReference>
<dbReference type="GO" id="GO:0045499">
    <property type="term" value="F:chemorepellent activity"/>
    <property type="evidence" value="ECO:0007669"/>
    <property type="project" value="TreeGrafter"/>
</dbReference>
<dbReference type="GO" id="GO:0030215">
    <property type="term" value="F:semaphorin receptor binding"/>
    <property type="evidence" value="ECO:0007669"/>
    <property type="project" value="InterPro"/>
</dbReference>
<dbReference type="GO" id="GO:0007411">
    <property type="term" value="P:axon guidance"/>
    <property type="evidence" value="ECO:0007669"/>
    <property type="project" value="TreeGrafter"/>
</dbReference>
<dbReference type="GO" id="GO:0030335">
    <property type="term" value="P:positive regulation of cell migration"/>
    <property type="evidence" value="ECO:0007669"/>
    <property type="project" value="TreeGrafter"/>
</dbReference>
<dbReference type="GO" id="GO:0071526">
    <property type="term" value="P:semaphorin-plexin signaling pathway"/>
    <property type="evidence" value="ECO:0007669"/>
    <property type="project" value="TreeGrafter"/>
</dbReference>
<dbReference type="CDD" id="cd11237">
    <property type="entry name" value="Sema_1A"/>
    <property type="match status" value="1"/>
</dbReference>
<dbReference type="FunFam" id="3.30.1680.10:FF:000016">
    <property type="entry name" value="Putative Semaphorin-6B"/>
    <property type="match status" value="1"/>
</dbReference>
<dbReference type="FunFam" id="2.130.10.10:FF:000346">
    <property type="entry name" value="Sema-1a, isoform D"/>
    <property type="match status" value="1"/>
</dbReference>
<dbReference type="Gene3D" id="3.30.1680.10">
    <property type="entry name" value="ligand-binding face of the semaphorins, domain 2"/>
    <property type="match status" value="1"/>
</dbReference>
<dbReference type="Gene3D" id="2.130.10.10">
    <property type="entry name" value="YVTN repeat-like/Quinoprotein amine dehydrogenase"/>
    <property type="match status" value="1"/>
</dbReference>
<dbReference type="InterPro" id="IPR002165">
    <property type="entry name" value="Plexin_repeat"/>
</dbReference>
<dbReference type="InterPro" id="IPR016201">
    <property type="entry name" value="PSI"/>
</dbReference>
<dbReference type="InterPro" id="IPR042068">
    <property type="entry name" value="SEM1A_sema_dom"/>
</dbReference>
<dbReference type="InterPro" id="IPR001627">
    <property type="entry name" value="Semap_dom"/>
</dbReference>
<dbReference type="InterPro" id="IPR036352">
    <property type="entry name" value="Semap_dom_sf"/>
</dbReference>
<dbReference type="InterPro" id="IPR027231">
    <property type="entry name" value="Semaphorin"/>
</dbReference>
<dbReference type="InterPro" id="IPR015943">
    <property type="entry name" value="WD40/YVTN_repeat-like_dom_sf"/>
</dbReference>
<dbReference type="PANTHER" id="PTHR11036:SF131">
    <property type="entry name" value="MIP07328P"/>
    <property type="match status" value="1"/>
</dbReference>
<dbReference type="PANTHER" id="PTHR11036">
    <property type="entry name" value="SEMAPHORIN"/>
    <property type="match status" value="1"/>
</dbReference>
<dbReference type="Pfam" id="PF01437">
    <property type="entry name" value="PSI"/>
    <property type="match status" value="1"/>
</dbReference>
<dbReference type="Pfam" id="PF01403">
    <property type="entry name" value="Sema"/>
    <property type="match status" value="1"/>
</dbReference>
<dbReference type="SMART" id="SM00423">
    <property type="entry name" value="PSI"/>
    <property type="match status" value="1"/>
</dbReference>
<dbReference type="SMART" id="SM00630">
    <property type="entry name" value="Sema"/>
    <property type="match status" value="1"/>
</dbReference>
<dbReference type="SUPFAM" id="SSF103575">
    <property type="entry name" value="Plexin repeat"/>
    <property type="match status" value="1"/>
</dbReference>
<dbReference type="SUPFAM" id="SSF101912">
    <property type="entry name" value="Sema domain"/>
    <property type="match status" value="1"/>
</dbReference>
<dbReference type="PROSITE" id="PS51004">
    <property type="entry name" value="SEMA"/>
    <property type="match status" value="1"/>
</dbReference>
<comment type="function">
    <text>Plays a role in growth cones guidance.</text>
</comment>
<comment type="subcellular location">
    <subcellularLocation>
        <location>Membrane</location>
        <topology>Single-pass type I membrane protein</topology>
    </subcellularLocation>
</comment>
<comment type="tissue specificity">
    <text>Dynamically expressed on a subset of axon pathways in the developing CNS and on circumferential bands of epithelial cells in developing limb buds.</text>
</comment>
<comment type="similarity">
    <text evidence="4">Belongs to the semaphorin family.</text>
</comment>
<evidence type="ECO:0000255" key="1"/>
<evidence type="ECO:0000255" key="2">
    <source>
        <dbReference type="PROSITE-ProRule" id="PRU00352"/>
    </source>
</evidence>
<evidence type="ECO:0000256" key="3">
    <source>
        <dbReference type="SAM" id="MobiDB-lite"/>
    </source>
</evidence>
<evidence type="ECO:0000305" key="4"/>
<feature type="signal peptide" evidence="1">
    <location>
        <begin position="1"/>
        <end position="20"/>
    </location>
</feature>
<feature type="chain" id="PRO_0000032298" description="Semaphorin-1A">
    <location>
        <begin position="21"/>
        <end position="730"/>
    </location>
</feature>
<feature type="topological domain" description="Extracellular" evidence="1">
    <location>
        <begin position="21"/>
        <end position="630"/>
    </location>
</feature>
<feature type="transmembrane region" description="Helical" evidence="1">
    <location>
        <begin position="631"/>
        <end position="651"/>
    </location>
</feature>
<feature type="topological domain" description="Cytoplasmic" evidence="1">
    <location>
        <begin position="652"/>
        <end position="730"/>
    </location>
</feature>
<feature type="domain" description="Sema" evidence="2">
    <location>
        <begin position="28"/>
        <end position="490"/>
    </location>
</feature>
<feature type="region of interest" description="Disordered" evidence="3">
    <location>
        <begin position="708"/>
        <end position="730"/>
    </location>
</feature>
<feature type="compositionally biased region" description="Low complexity" evidence="3">
    <location>
        <begin position="708"/>
        <end position="720"/>
    </location>
</feature>
<feature type="glycosylation site" description="N-linked (GlcNAc...) asparagine" evidence="1">
    <location>
        <position position="44"/>
    </location>
</feature>
<feature type="glycosylation site" description="N-linked (GlcNAc...) asparagine" evidence="1">
    <location>
        <position position="71"/>
    </location>
</feature>
<feature type="glycosylation site" description="N-linked (GlcNAc...) asparagine" evidence="1">
    <location>
        <position position="163"/>
    </location>
</feature>
<feature type="glycosylation site" description="N-linked (GlcNAc...) asparagine" evidence="1">
    <location>
        <position position="267"/>
    </location>
</feature>
<feature type="glycosylation site" description="N-linked (GlcNAc...) asparagine" evidence="1">
    <location>
        <position position="360"/>
    </location>
</feature>
<feature type="glycosylation site" description="N-linked (GlcNAc...) asparagine" evidence="1">
    <location>
        <position position="539"/>
    </location>
</feature>
<feature type="disulfide bond" evidence="2">
    <location>
        <begin position="97"/>
        <end position="107"/>
    </location>
</feature>
<feature type="disulfide bond" evidence="2">
    <location>
        <begin position="125"/>
        <end position="134"/>
    </location>
</feature>
<feature type="disulfide bond" evidence="2">
    <location>
        <begin position="244"/>
        <end position="358"/>
    </location>
</feature>
<feature type="disulfide bond" evidence="2">
    <location>
        <begin position="268"/>
        <end position="317"/>
    </location>
</feature>
<feature type="disulfide bond" evidence="2">
    <location>
        <begin position="493"/>
        <end position="512"/>
    </location>
</feature>
<feature type="disulfide bond" evidence="2">
    <location>
        <begin position="504"/>
        <end position="521"/>
    </location>
</feature>
<reference key="1">
    <citation type="journal article" date="1992" name="Neuron">
        <title>Fasciclin IV: sequence, expression, and function during growth cone guidance in the grasshopper embryo.</title>
        <authorList>
            <person name="Kolodkin A.L."/>
            <person name="Matthes D.J."/>
            <person name="O'Connor T.P."/>
            <person name="Patel N.H."/>
            <person name="Admon A."/>
            <person name="Bentley D."/>
            <person name="Goodman C.S."/>
        </authorList>
    </citation>
    <scope>NUCLEOTIDE SEQUENCE [MRNA]</scope>
    <scope>PARTIAL PROTEIN SEQUENCE</scope>
</reference>
<organism>
    <name type="scientific">Schistocerca americana</name>
    <name type="common">American grasshopper</name>
    <dbReference type="NCBI Taxonomy" id="7009"/>
    <lineage>
        <taxon>Eukaryota</taxon>
        <taxon>Metazoa</taxon>
        <taxon>Ecdysozoa</taxon>
        <taxon>Arthropoda</taxon>
        <taxon>Hexapoda</taxon>
        <taxon>Insecta</taxon>
        <taxon>Pterygota</taxon>
        <taxon>Neoptera</taxon>
        <taxon>Polyneoptera</taxon>
        <taxon>Orthoptera</taxon>
        <taxon>Caelifera</taxon>
        <taxon>Acrididea</taxon>
        <taxon>Acridomorpha</taxon>
        <taxon>Acridoidea</taxon>
        <taxon>Acrididae</taxon>
        <taxon>Cyrtacanthacridinae</taxon>
        <taxon>Schistocerca</taxon>
    </lineage>
</organism>
<name>SEM1A_SCHAM</name>
<keyword id="KW-0217">Developmental protein</keyword>
<keyword id="KW-0221">Differentiation</keyword>
<keyword id="KW-0903">Direct protein sequencing</keyword>
<keyword id="KW-1015">Disulfide bond</keyword>
<keyword id="KW-0325">Glycoprotein</keyword>
<keyword id="KW-0472">Membrane</keyword>
<keyword id="KW-0524">Neurogenesis</keyword>
<keyword id="KW-0732">Signal</keyword>
<keyword id="KW-0812">Transmembrane</keyword>
<keyword id="KW-1133">Transmembrane helix</keyword>
<protein>
    <recommendedName>
        <fullName>Semaphorin-1A</fullName>
    </recommendedName>
    <alternativeName>
        <fullName>Fasciclin IV</fullName>
    </alternativeName>
    <alternativeName>
        <fullName>Fasciclin-4</fullName>
    </alternativeName>
    <alternativeName>
        <fullName>Semaphorin-I</fullName>
        <shortName>Sema I</shortName>
    </alternativeName>
</protein>
<gene>
    <name type="primary">SEMA-1A</name>
    <name type="synonym">FAS4</name>
</gene>
<proteinExistence type="evidence at protein level"/>
<accession>Q26473</accession>